<keyword id="KW-0002">3D-structure</keyword>
<keyword id="KW-1035">Host cytoplasm</keyword>
<keyword id="KW-1185">Reference proteome</keyword>
<keyword id="KW-0946">Virion</keyword>
<comment type="subunit">
    <text evidence="2">Homotrimer.</text>
</comment>
<comment type="subcellular location">
    <subcellularLocation>
        <location evidence="2">Virion</location>
    </subcellularLocation>
    <subcellularLocation>
        <location evidence="2">Host cytoplasm</location>
    </subcellularLocation>
</comment>
<comment type="similarity">
    <text evidence="3">Belongs to the cyclophilin-type PPIase family.</text>
</comment>
<comment type="caution">
    <text evidence="4">Lacks the conserved Arg in position 83 necessary for PPIase activity, and does not display any PPIase activity in vitro (PubMed:18342330). This protein was presumably a host PPIase stolen and converted by the virus to play a different function.</text>
</comment>
<name>PPIL_MIMIV</name>
<dbReference type="EMBL" id="AY653733">
    <property type="protein sequence ID" value="AAV50868.1"/>
    <property type="molecule type" value="Genomic_DNA"/>
</dbReference>
<dbReference type="PDB" id="2OSE">
    <property type="method" value="X-ray"/>
    <property type="resolution" value="2.04 A"/>
    <property type="chains" value="A=1-234"/>
</dbReference>
<dbReference type="PDBsum" id="2OSE"/>
<dbReference type="SMR" id="Q5UP71"/>
<dbReference type="KEGG" id="vg:9925243"/>
<dbReference type="OrthoDB" id="10817at10239"/>
<dbReference type="BRENDA" id="5.2.1.8">
    <property type="organism ID" value="9231"/>
</dbReference>
<dbReference type="EvolutionaryTrace" id="Q5UP71"/>
<dbReference type="Proteomes" id="UP000001134">
    <property type="component" value="Genome"/>
</dbReference>
<dbReference type="GO" id="GO:0030430">
    <property type="term" value="C:host cell cytoplasm"/>
    <property type="evidence" value="ECO:0007669"/>
    <property type="project" value="UniProtKB-SubCell"/>
</dbReference>
<dbReference type="GO" id="GO:0044423">
    <property type="term" value="C:virion component"/>
    <property type="evidence" value="ECO:0007669"/>
    <property type="project" value="UniProtKB-KW"/>
</dbReference>
<dbReference type="GO" id="GO:0016018">
    <property type="term" value="F:cyclosporin A binding"/>
    <property type="evidence" value="ECO:0007669"/>
    <property type="project" value="TreeGrafter"/>
</dbReference>
<dbReference type="GO" id="GO:0003755">
    <property type="term" value="F:peptidyl-prolyl cis-trans isomerase activity"/>
    <property type="evidence" value="ECO:0007669"/>
    <property type="project" value="InterPro"/>
</dbReference>
<dbReference type="GO" id="GO:0006457">
    <property type="term" value="P:protein folding"/>
    <property type="evidence" value="ECO:0007669"/>
    <property type="project" value="TreeGrafter"/>
</dbReference>
<dbReference type="Gene3D" id="2.40.100.10">
    <property type="entry name" value="Cyclophilin-like"/>
    <property type="match status" value="1"/>
</dbReference>
<dbReference type="InterPro" id="IPR029000">
    <property type="entry name" value="Cyclophilin-like_dom_sf"/>
</dbReference>
<dbReference type="InterPro" id="IPR024936">
    <property type="entry name" value="Cyclophilin-type_PPIase"/>
</dbReference>
<dbReference type="InterPro" id="IPR002130">
    <property type="entry name" value="Cyclophilin-type_PPIase_dom"/>
</dbReference>
<dbReference type="PANTHER" id="PTHR11071">
    <property type="entry name" value="PEPTIDYL-PROLYL CIS-TRANS ISOMERASE"/>
    <property type="match status" value="1"/>
</dbReference>
<dbReference type="PANTHER" id="PTHR11071:SF561">
    <property type="entry name" value="PEPTIDYL-PROLYL CIS-TRANS ISOMERASE D-RELATED"/>
    <property type="match status" value="1"/>
</dbReference>
<dbReference type="Pfam" id="PF00160">
    <property type="entry name" value="Pro_isomerase"/>
    <property type="match status" value="1"/>
</dbReference>
<dbReference type="PIRSF" id="PIRSF001467">
    <property type="entry name" value="Peptidylpro_ismrse"/>
    <property type="match status" value="1"/>
</dbReference>
<dbReference type="PRINTS" id="PR00153">
    <property type="entry name" value="CSAPPISMRASE"/>
</dbReference>
<dbReference type="SUPFAM" id="SSF50891">
    <property type="entry name" value="Cyclophilin-like"/>
    <property type="match status" value="1"/>
</dbReference>
<dbReference type="PROSITE" id="PS50072">
    <property type="entry name" value="CSA_PPIASE_2"/>
    <property type="match status" value="1"/>
</dbReference>
<accession>Q5UP71</accession>
<proteinExistence type="evidence at protein level"/>
<gene>
    <name type="ordered locus">MIMI_L605</name>
</gene>
<evidence type="ECO:0000255" key="1">
    <source>
        <dbReference type="PROSITE-ProRule" id="PRU00156"/>
    </source>
</evidence>
<evidence type="ECO:0000269" key="2">
    <source>
    </source>
</evidence>
<evidence type="ECO:0000305" key="3"/>
<evidence type="ECO:0000305" key="4">
    <source>
    </source>
</evidence>
<evidence type="ECO:0007829" key="5">
    <source>
        <dbReference type="PDB" id="2OSE"/>
    </source>
</evidence>
<protein>
    <recommendedName>
        <fullName>Structural PPIase-like protein L605</fullName>
    </recommendedName>
    <alternativeName>
        <fullName>Mimicyp</fullName>
    </alternativeName>
</protein>
<organism>
    <name type="scientific">Acanthamoeba polyphaga mimivirus</name>
    <name type="common">APMV</name>
    <dbReference type="NCBI Taxonomy" id="212035"/>
    <lineage>
        <taxon>Viruses</taxon>
        <taxon>Varidnaviria</taxon>
        <taxon>Bamfordvirae</taxon>
        <taxon>Nucleocytoviricota</taxon>
        <taxon>Megaviricetes</taxon>
        <taxon>Imitervirales</taxon>
        <taxon>Mimiviridae</taxon>
        <taxon>Megamimivirinae</taxon>
        <taxon>Mimivirus</taxon>
        <taxon>Mimivirus bradfordmassiliense</taxon>
    </lineage>
</organism>
<sequence length="234" mass="26539">MNYSLEDLPNSGKNPRVYMDIVLNNEIIGRLQIKLFRDAFPAGVENFVQLTNGKTYRVNSNGTGKYKYNRHINRTYEGCKFHNVLHNNYIVSGDIYNSNGSSAGTVYCDEPIPPVFGDYFYPHESKGLLSLVPYTDESGNRYYDSTFMITLDDIRPSNVLDELDRDQVVIGQVYGGLDVLDKINSMIKPYAGRKYPTFSIGKCGAYLDSSQAQRKRPVNVNGTKRFLNKPTRVN</sequence>
<feature type="chain" id="PRO_0000064219" description="Structural PPIase-like protein L605">
    <location>
        <begin position="1"/>
        <end position="234"/>
    </location>
</feature>
<feature type="domain" description="PPIase cyclophilin-type" evidence="1">
    <location>
        <begin position="18"/>
        <end position="205"/>
    </location>
</feature>
<feature type="mutagenesis site" description="Complete loss of homotrimerization." evidence="2">
    <original>KPYAGRK</original>
    <variation>SGSSG</variation>
    <location>
        <begin position="188"/>
        <end position="194"/>
    </location>
</feature>
<feature type="strand" evidence="5">
    <location>
        <begin position="5"/>
        <end position="7"/>
    </location>
</feature>
<feature type="strand" evidence="5">
    <location>
        <begin position="16"/>
        <end position="23"/>
    </location>
</feature>
<feature type="strand" evidence="5">
    <location>
        <begin position="26"/>
        <end position="35"/>
    </location>
</feature>
<feature type="helix" evidence="5">
    <location>
        <begin position="37"/>
        <end position="39"/>
    </location>
</feature>
<feature type="helix" evidence="5">
    <location>
        <begin position="41"/>
        <end position="52"/>
    </location>
</feature>
<feature type="strand" evidence="5">
    <location>
        <begin position="83"/>
        <end position="85"/>
    </location>
</feature>
<feature type="turn" evidence="5">
    <location>
        <begin position="86"/>
        <end position="88"/>
    </location>
</feature>
<feature type="strand" evidence="5">
    <location>
        <begin position="89"/>
        <end position="92"/>
    </location>
</feature>
<feature type="turn" evidence="5">
    <location>
        <begin position="106"/>
        <end position="109"/>
    </location>
</feature>
<feature type="strand" evidence="5">
    <location>
        <begin position="128"/>
        <end position="131"/>
    </location>
</feature>
<feature type="strand" evidence="5">
    <location>
        <begin position="141"/>
        <end position="143"/>
    </location>
</feature>
<feature type="strand" evidence="5">
    <location>
        <begin position="147"/>
        <end position="152"/>
    </location>
</feature>
<feature type="helix" evidence="5">
    <location>
        <begin position="160"/>
        <end position="162"/>
    </location>
</feature>
<feature type="strand" evidence="5">
    <location>
        <begin position="167"/>
        <end position="175"/>
    </location>
</feature>
<feature type="helix" evidence="5">
    <location>
        <begin position="177"/>
        <end position="186"/>
    </location>
</feature>
<feature type="strand" evidence="5">
    <location>
        <begin position="198"/>
        <end position="205"/>
    </location>
</feature>
<feature type="helix" evidence="5">
    <location>
        <begin position="209"/>
        <end position="212"/>
    </location>
</feature>
<organismHost>
    <name type="scientific">Acanthamoeba polyphaga</name>
    <name type="common">Amoeba</name>
    <dbReference type="NCBI Taxonomy" id="5757"/>
</organismHost>
<reference key="1">
    <citation type="journal article" date="2004" name="Science">
        <title>The 1.2-megabase genome sequence of Mimivirus.</title>
        <authorList>
            <person name="Raoult D."/>
            <person name="Audic S."/>
            <person name="Robert C."/>
            <person name="Abergel C."/>
            <person name="Renesto P."/>
            <person name="Ogata H."/>
            <person name="La Scola B."/>
            <person name="Susan M."/>
            <person name="Claverie J.-M."/>
        </authorList>
    </citation>
    <scope>NUCLEOTIDE SEQUENCE [LARGE SCALE GENOMIC DNA]</scope>
    <source>
        <strain>Rowbotham-Bradford</strain>
    </source>
</reference>
<reference key="2">
    <citation type="journal article" date="2008" name="J. Mol. Biol.">
        <title>Structural, biochemical, and in vivo characterization of the first virally encoded cyclophilin from the Mimivirus.</title>
        <authorList>
            <person name="Thai V."/>
            <person name="Renesto P."/>
            <person name="Fowler C.A."/>
            <person name="Brown D.J."/>
            <person name="Davis T."/>
            <person name="Gu W."/>
            <person name="Pollock D.D."/>
            <person name="Kern D."/>
            <person name="Raoult D."/>
            <person name="Eisenmesser E.Z."/>
        </authorList>
    </citation>
    <scope>X-RAY CRYSTALLOGRAPHY (2.0 ANGSTROMS)</scope>
    <scope>MUTAGENESIS OF 188-LYS--LYS-194</scope>
    <scope>SUBUNIT</scope>
    <scope>SUBCELLULAR LOCATION</scope>
</reference>